<organismHost>
    <name type="scientific">Ornithodoros</name>
    <name type="common">relapsing fever ticks</name>
    <dbReference type="NCBI Taxonomy" id="6937"/>
</organismHost>
<organismHost>
    <name type="scientific">Phacochoerus aethiopicus</name>
    <name type="common">Warthog</name>
    <dbReference type="NCBI Taxonomy" id="85517"/>
</organismHost>
<organismHost>
    <name type="scientific">Phacochoerus africanus</name>
    <name type="common">Warthog</name>
    <dbReference type="NCBI Taxonomy" id="41426"/>
</organismHost>
<organismHost>
    <name type="scientific">Potamochoerus larvatus</name>
    <name type="common">Bushpig</name>
    <dbReference type="NCBI Taxonomy" id="273792"/>
</organismHost>
<organismHost>
    <name type="scientific">Sus scrofa</name>
    <name type="common">Pig</name>
    <dbReference type="NCBI Taxonomy" id="9823"/>
</organismHost>
<reference key="1">
    <citation type="submission" date="2003-03" db="EMBL/GenBank/DDBJ databases">
        <title>African swine fever virus genomes.</title>
        <authorList>
            <person name="Kutish G.F."/>
            <person name="Rock D.L."/>
        </authorList>
    </citation>
    <scope>NUCLEOTIDE SEQUENCE [LARGE SCALE GENOMIC DNA]</scope>
</reference>
<gene>
    <name type="ordered locus">Mal-004</name>
</gene>
<feature type="chain" id="PRO_0000373253" description="Protein MGF 360-3L">
    <location>
        <begin position="1"/>
        <end position="355"/>
    </location>
</feature>
<feature type="repeat" description="ANK">
    <location>
        <begin position="60"/>
        <end position="92"/>
    </location>
</feature>
<protein>
    <recommendedName>
        <fullName>Protein MGF 360-3L</fullName>
    </recommendedName>
</protein>
<name>3603L_ASFM2</name>
<sequence>MQPSTLQALTKRVLATQHVSNDDYCILERCGLWWHDAPITLYTDGEQILIKTPYYKEGIKLNTALVLAVKENNYDLIVLFTEWGANINYALLSVNKEYTRNLCRNLGAKEGLEASEVLRFFFETKRHKTSSNIILCHELFSNNPFLQNVNMVELRMIIYWELKDLITNLIVNENSFTEMLTKYWYGIAVKYNLKEAIQYFCQEYEHLNEWRLICALSFNNVFELHEICNTMNIDMNINKMMRLACMRDNNFLTIYYCFALGADINRAMYGSVSNFRIENMFFCMDLGADAFEESLELAERHGYSVIVDILSLKIYKANPILLAKETNPEKINTLLKNYYPKNMLAYDIYRIDNYL</sequence>
<proteinExistence type="inferred from homology"/>
<evidence type="ECO:0000250" key="1">
    <source>
        <dbReference type="UniProtKB" id="P23165"/>
    </source>
</evidence>
<evidence type="ECO:0000305" key="2"/>
<dbReference type="EMBL" id="AY261361">
    <property type="status" value="NOT_ANNOTATED_CDS"/>
    <property type="molecule type" value="Genomic_DNA"/>
</dbReference>
<dbReference type="SMR" id="P0C9M7"/>
<dbReference type="Proteomes" id="UP000000860">
    <property type="component" value="Segment"/>
</dbReference>
<dbReference type="GO" id="GO:0042330">
    <property type="term" value="P:taxis"/>
    <property type="evidence" value="ECO:0007669"/>
    <property type="project" value="InterPro"/>
</dbReference>
<dbReference type="InterPro" id="IPR002595">
    <property type="entry name" value="ASFV_MGF360"/>
</dbReference>
<dbReference type="Pfam" id="PF01671">
    <property type="entry name" value="ASFV_360"/>
    <property type="match status" value="1"/>
</dbReference>
<comment type="function">
    <text evidence="1">Plays a role in virus cell tropism, and may be required for efficient virus replication in macrophages.</text>
</comment>
<comment type="similarity">
    <text evidence="2">Belongs to the asfivirus MGF 360 family.</text>
</comment>
<accession>P0C9M7</accession>
<keyword id="KW-0040">ANK repeat</keyword>
<organism>
    <name type="scientific">African swine fever virus (isolate Tick/Malawi/Lil 20-1/1983)</name>
    <name type="common">ASFV</name>
    <dbReference type="NCBI Taxonomy" id="10500"/>
    <lineage>
        <taxon>Viruses</taxon>
        <taxon>Varidnaviria</taxon>
        <taxon>Bamfordvirae</taxon>
        <taxon>Nucleocytoviricota</taxon>
        <taxon>Pokkesviricetes</taxon>
        <taxon>Asfuvirales</taxon>
        <taxon>Asfarviridae</taxon>
        <taxon>Asfivirus</taxon>
        <taxon>African swine fever virus</taxon>
    </lineage>
</organism>